<dbReference type="EMBL" id="AC114772">
    <property type="status" value="NOT_ANNOTATED_CDS"/>
    <property type="molecule type" value="Genomic_DNA"/>
</dbReference>
<dbReference type="EMBL" id="AK127187">
    <property type="protein sequence ID" value="BAC86877.1"/>
    <property type="status" value="ALT_INIT"/>
    <property type="molecule type" value="mRNA"/>
</dbReference>
<dbReference type="FunCoup" id="Q6ZSR9">
    <property type="interactions" value="166"/>
</dbReference>
<dbReference type="IntAct" id="Q6ZSR9">
    <property type="interactions" value="10"/>
</dbReference>
<dbReference type="ChEMBL" id="CHEMBL4105933"/>
<dbReference type="DrugCentral" id="Q6ZSR9"/>
<dbReference type="GlyGen" id="Q6ZSR9">
    <property type="glycosylation" value="10 sites, 2 O-linked glycans (10 sites)"/>
</dbReference>
<dbReference type="iPTMnet" id="Q6ZSR9"/>
<dbReference type="MetOSite" id="Q6ZSR9"/>
<dbReference type="PhosphoSitePlus" id="Q6ZSR9"/>
<dbReference type="BioMuta" id="-"/>
<dbReference type="DMDM" id="172046183"/>
<dbReference type="jPOST" id="Q6ZSR9"/>
<dbReference type="MassIVE" id="Q6ZSR9"/>
<dbReference type="PeptideAtlas" id="Q6ZSR9"/>
<dbReference type="Pumba" id="Q6ZSR9"/>
<dbReference type="neXtProt" id="NX_Q6ZSR9"/>
<dbReference type="InParanoid" id="Q6ZSR9"/>
<dbReference type="PAN-GO" id="Q6ZSR9">
    <property type="GO annotations" value="0 GO annotations based on evolutionary models"/>
</dbReference>
<dbReference type="PhylomeDB" id="Q6ZSR9"/>
<dbReference type="PathwayCommons" id="Q6ZSR9"/>
<dbReference type="Pharos" id="Q6ZSR9">
    <property type="development level" value="Tchem"/>
</dbReference>
<dbReference type="Proteomes" id="UP000005640">
    <property type="component" value="Unplaced"/>
</dbReference>
<dbReference type="RNAct" id="Q6ZSR9">
    <property type="molecule type" value="protein"/>
</dbReference>
<dbReference type="InterPro" id="IPR051744">
    <property type="entry name" value="AP2_assoc_SerThr_kinase"/>
</dbReference>
<dbReference type="InterPro" id="IPR028182">
    <property type="entry name" value="BMP2K_C"/>
</dbReference>
<dbReference type="PANTHER" id="PTHR47907:SF5">
    <property type="entry name" value="AP2 ASSOCIATED KINASE 1"/>
    <property type="match status" value="1"/>
</dbReference>
<dbReference type="PANTHER" id="PTHR47907">
    <property type="entry name" value="PROTEIN KINASE DOMAIN-CONTAINING PROTEIN"/>
    <property type="match status" value="1"/>
</dbReference>
<dbReference type="Pfam" id="PF15282">
    <property type="entry name" value="BMP2K_C"/>
    <property type="match status" value="1"/>
</dbReference>
<feature type="chain" id="PRO_0000325932" description="Uncharacterized protein FLJ45252">
    <location>
        <begin position="1"/>
        <end position="355"/>
    </location>
</feature>
<feature type="region of interest" description="Disordered" evidence="2">
    <location>
        <begin position="1"/>
        <end position="104"/>
    </location>
</feature>
<feature type="region of interest" description="Disordered" evidence="2">
    <location>
        <begin position="247"/>
        <end position="310"/>
    </location>
</feature>
<feature type="region of interest" description="Disordered" evidence="2">
    <location>
        <begin position="325"/>
        <end position="355"/>
    </location>
</feature>
<feature type="compositionally biased region" description="Acidic residues" evidence="2">
    <location>
        <begin position="45"/>
        <end position="54"/>
    </location>
</feature>
<feature type="compositionally biased region" description="Polar residues" evidence="2">
    <location>
        <begin position="325"/>
        <end position="334"/>
    </location>
</feature>
<feature type="compositionally biased region" description="Low complexity" evidence="2">
    <location>
        <begin position="336"/>
        <end position="348"/>
    </location>
</feature>
<feature type="modified residue" description="N6-acetyllysine" evidence="1">
    <location>
        <position position="19"/>
    </location>
</feature>
<feature type="modified residue" description="Phosphoserine" evidence="1">
    <location>
        <position position="175"/>
    </location>
</feature>
<feature type="modified residue" description="Phosphotyrosine" evidence="1">
    <location>
        <position position="293"/>
    </location>
</feature>
<feature type="modified residue" description="Phosphoserine" evidence="1">
    <location>
        <position position="294"/>
    </location>
</feature>
<organism>
    <name type="scientific">Homo sapiens</name>
    <name type="common">Human</name>
    <dbReference type="NCBI Taxonomy" id="9606"/>
    <lineage>
        <taxon>Eukaryota</taxon>
        <taxon>Metazoa</taxon>
        <taxon>Chordata</taxon>
        <taxon>Craniata</taxon>
        <taxon>Vertebrata</taxon>
        <taxon>Euteleostomi</taxon>
        <taxon>Mammalia</taxon>
        <taxon>Eutheria</taxon>
        <taxon>Euarchontoglires</taxon>
        <taxon>Primates</taxon>
        <taxon>Haplorrhini</taxon>
        <taxon>Catarrhini</taxon>
        <taxon>Hominidae</taxon>
        <taxon>Homo</taxon>
    </lineage>
</organism>
<reference key="1">
    <citation type="journal article" date="2004" name="Nature">
        <title>The DNA sequence and comparative analysis of human chromosome 10.</title>
        <authorList>
            <person name="Deloukas P."/>
            <person name="Earthrowl M.E."/>
            <person name="Grafham D.V."/>
            <person name="Rubenfield M."/>
            <person name="French L."/>
            <person name="Steward C.A."/>
            <person name="Sims S.K."/>
            <person name="Jones M.C."/>
            <person name="Searle S."/>
            <person name="Scott C."/>
            <person name="Howe K."/>
            <person name="Hunt S.E."/>
            <person name="Andrews T.D."/>
            <person name="Gilbert J.G.R."/>
            <person name="Swarbreck D."/>
            <person name="Ashurst J.L."/>
            <person name="Taylor A."/>
            <person name="Battles J."/>
            <person name="Bird C.P."/>
            <person name="Ainscough R."/>
            <person name="Almeida J.P."/>
            <person name="Ashwell R.I.S."/>
            <person name="Ambrose K.D."/>
            <person name="Babbage A.K."/>
            <person name="Bagguley C.L."/>
            <person name="Bailey J."/>
            <person name="Banerjee R."/>
            <person name="Bates K."/>
            <person name="Beasley H."/>
            <person name="Bray-Allen S."/>
            <person name="Brown A.J."/>
            <person name="Brown J.Y."/>
            <person name="Burford D.C."/>
            <person name="Burrill W."/>
            <person name="Burton J."/>
            <person name="Cahill P."/>
            <person name="Camire D."/>
            <person name="Carter N.P."/>
            <person name="Chapman J.C."/>
            <person name="Clark S.Y."/>
            <person name="Clarke G."/>
            <person name="Clee C.M."/>
            <person name="Clegg S."/>
            <person name="Corby N."/>
            <person name="Coulson A."/>
            <person name="Dhami P."/>
            <person name="Dutta I."/>
            <person name="Dunn M."/>
            <person name="Faulkner L."/>
            <person name="Frankish A."/>
            <person name="Frankland J.A."/>
            <person name="Garner P."/>
            <person name="Garnett J."/>
            <person name="Gribble S."/>
            <person name="Griffiths C."/>
            <person name="Grocock R."/>
            <person name="Gustafson E."/>
            <person name="Hammond S."/>
            <person name="Harley J.L."/>
            <person name="Hart E."/>
            <person name="Heath P.D."/>
            <person name="Ho T.P."/>
            <person name="Hopkins B."/>
            <person name="Horne J."/>
            <person name="Howden P.J."/>
            <person name="Huckle E."/>
            <person name="Hynds C."/>
            <person name="Johnson C."/>
            <person name="Johnson D."/>
            <person name="Kana A."/>
            <person name="Kay M."/>
            <person name="Kimberley A.M."/>
            <person name="Kershaw J.K."/>
            <person name="Kokkinaki M."/>
            <person name="Laird G.K."/>
            <person name="Lawlor S."/>
            <person name="Lee H.M."/>
            <person name="Leongamornlert D.A."/>
            <person name="Laird G."/>
            <person name="Lloyd C."/>
            <person name="Lloyd D.M."/>
            <person name="Loveland J."/>
            <person name="Lovell J."/>
            <person name="McLaren S."/>
            <person name="McLay K.E."/>
            <person name="McMurray A."/>
            <person name="Mashreghi-Mohammadi M."/>
            <person name="Matthews L."/>
            <person name="Milne S."/>
            <person name="Nickerson T."/>
            <person name="Nguyen M."/>
            <person name="Overton-Larty E."/>
            <person name="Palmer S.A."/>
            <person name="Pearce A.V."/>
            <person name="Peck A.I."/>
            <person name="Pelan S."/>
            <person name="Phillimore B."/>
            <person name="Porter K."/>
            <person name="Rice C.M."/>
            <person name="Rogosin A."/>
            <person name="Ross M.T."/>
            <person name="Sarafidou T."/>
            <person name="Sehra H.K."/>
            <person name="Shownkeen R."/>
            <person name="Skuce C.D."/>
            <person name="Smith M."/>
            <person name="Standring L."/>
            <person name="Sycamore N."/>
            <person name="Tester J."/>
            <person name="Thorpe A."/>
            <person name="Torcasso W."/>
            <person name="Tracey A."/>
            <person name="Tromans A."/>
            <person name="Tsolas J."/>
            <person name="Wall M."/>
            <person name="Walsh J."/>
            <person name="Wang H."/>
            <person name="Weinstock K."/>
            <person name="West A.P."/>
            <person name="Willey D.L."/>
            <person name="Whitehead S.L."/>
            <person name="Wilming L."/>
            <person name="Wray P.W."/>
            <person name="Young L."/>
            <person name="Chen Y."/>
            <person name="Lovering R.C."/>
            <person name="Moschonas N.K."/>
            <person name="Siebert R."/>
            <person name="Fechtel K."/>
            <person name="Bentley D."/>
            <person name="Durbin R.M."/>
            <person name="Hubbard T."/>
            <person name="Doucette-Stamm L."/>
            <person name="Beck S."/>
            <person name="Smith D.R."/>
            <person name="Rogers J."/>
        </authorList>
    </citation>
    <scope>NUCLEOTIDE SEQUENCE [LARGE SCALE GENOMIC DNA]</scope>
</reference>
<reference key="2">
    <citation type="journal article" date="2004" name="Nat. Genet.">
        <title>Complete sequencing and characterization of 21,243 full-length human cDNAs.</title>
        <authorList>
            <person name="Ota T."/>
            <person name="Suzuki Y."/>
            <person name="Nishikawa T."/>
            <person name="Otsuki T."/>
            <person name="Sugiyama T."/>
            <person name="Irie R."/>
            <person name="Wakamatsu A."/>
            <person name="Hayashi K."/>
            <person name="Sato H."/>
            <person name="Nagai K."/>
            <person name="Kimura K."/>
            <person name="Makita H."/>
            <person name="Sekine M."/>
            <person name="Obayashi M."/>
            <person name="Nishi T."/>
            <person name="Shibahara T."/>
            <person name="Tanaka T."/>
            <person name="Ishii S."/>
            <person name="Yamamoto J."/>
            <person name="Saito K."/>
            <person name="Kawai Y."/>
            <person name="Isono Y."/>
            <person name="Nakamura Y."/>
            <person name="Nagahari K."/>
            <person name="Murakami K."/>
            <person name="Yasuda T."/>
            <person name="Iwayanagi T."/>
            <person name="Wagatsuma M."/>
            <person name="Shiratori A."/>
            <person name="Sudo H."/>
            <person name="Hosoiri T."/>
            <person name="Kaku Y."/>
            <person name="Kodaira H."/>
            <person name="Kondo H."/>
            <person name="Sugawara M."/>
            <person name="Takahashi M."/>
            <person name="Kanda K."/>
            <person name="Yokoi T."/>
            <person name="Furuya T."/>
            <person name="Kikkawa E."/>
            <person name="Omura Y."/>
            <person name="Abe K."/>
            <person name="Kamihara K."/>
            <person name="Katsuta N."/>
            <person name="Sato K."/>
            <person name="Tanikawa M."/>
            <person name="Yamazaki M."/>
            <person name="Ninomiya K."/>
            <person name="Ishibashi T."/>
            <person name="Yamashita H."/>
            <person name="Murakawa K."/>
            <person name="Fujimori K."/>
            <person name="Tanai H."/>
            <person name="Kimata M."/>
            <person name="Watanabe M."/>
            <person name="Hiraoka S."/>
            <person name="Chiba Y."/>
            <person name="Ishida S."/>
            <person name="Ono Y."/>
            <person name="Takiguchi S."/>
            <person name="Watanabe S."/>
            <person name="Yosida M."/>
            <person name="Hotuta T."/>
            <person name="Kusano J."/>
            <person name="Kanehori K."/>
            <person name="Takahashi-Fujii A."/>
            <person name="Hara H."/>
            <person name="Tanase T.-O."/>
            <person name="Nomura Y."/>
            <person name="Togiya S."/>
            <person name="Komai F."/>
            <person name="Hara R."/>
            <person name="Takeuchi K."/>
            <person name="Arita M."/>
            <person name="Imose N."/>
            <person name="Musashino K."/>
            <person name="Yuuki H."/>
            <person name="Oshima A."/>
            <person name="Sasaki N."/>
            <person name="Aotsuka S."/>
            <person name="Yoshikawa Y."/>
            <person name="Matsunawa H."/>
            <person name="Ichihara T."/>
            <person name="Shiohata N."/>
            <person name="Sano S."/>
            <person name="Moriya S."/>
            <person name="Momiyama H."/>
            <person name="Satoh N."/>
            <person name="Takami S."/>
            <person name="Terashima Y."/>
            <person name="Suzuki O."/>
            <person name="Nakagawa S."/>
            <person name="Senoh A."/>
            <person name="Mizoguchi H."/>
            <person name="Goto Y."/>
            <person name="Shimizu F."/>
            <person name="Wakebe H."/>
            <person name="Hishigaki H."/>
            <person name="Watanabe T."/>
            <person name="Sugiyama A."/>
            <person name="Takemoto M."/>
            <person name="Kawakami B."/>
            <person name="Yamazaki M."/>
            <person name="Watanabe K."/>
            <person name="Kumagai A."/>
            <person name="Itakura S."/>
            <person name="Fukuzumi Y."/>
            <person name="Fujimori Y."/>
            <person name="Komiyama M."/>
            <person name="Tashiro H."/>
            <person name="Tanigami A."/>
            <person name="Fujiwara T."/>
            <person name="Ono T."/>
            <person name="Yamada K."/>
            <person name="Fujii Y."/>
            <person name="Ozaki K."/>
            <person name="Hirao M."/>
            <person name="Ohmori Y."/>
            <person name="Kawabata A."/>
            <person name="Hikiji T."/>
            <person name="Kobatake N."/>
            <person name="Inagaki H."/>
            <person name="Ikema Y."/>
            <person name="Okamoto S."/>
            <person name="Okitani R."/>
            <person name="Kawakami T."/>
            <person name="Noguchi S."/>
            <person name="Itoh T."/>
            <person name="Shigeta K."/>
            <person name="Senba T."/>
            <person name="Matsumura K."/>
            <person name="Nakajima Y."/>
            <person name="Mizuno T."/>
            <person name="Morinaga M."/>
            <person name="Sasaki M."/>
            <person name="Togashi T."/>
            <person name="Oyama M."/>
            <person name="Hata H."/>
            <person name="Watanabe M."/>
            <person name="Komatsu T."/>
            <person name="Mizushima-Sugano J."/>
            <person name="Satoh T."/>
            <person name="Shirai Y."/>
            <person name="Takahashi Y."/>
            <person name="Nakagawa K."/>
            <person name="Okumura K."/>
            <person name="Nagase T."/>
            <person name="Nomura N."/>
            <person name="Kikuchi H."/>
            <person name="Masuho Y."/>
            <person name="Yamashita R."/>
            <person name="Nakai K."/>
            <person name="Yada T."/>
            <person name="Nakamura Y."/>
            <person name="Ohara O."/>
            <person name="Isogai T."/>
            <person name="Sugano S."/>
        </authorList>
    </citation>
    <scope>NUCLEOTIDE SEQUENCE [LARGE SCALE MRNA] OF 126-355</scope>
    <source>
        <tissue>Hippocampus</tissue>
    </source>
</reference>
<accession>Q6ZSR9</accession>
<keyword id="KW-0007">Acetylation</keyword>
<keyword id="KW-0597">Phosphoprotein</keyword>
<keyword id="KW-1267">Proteomics identification</keyword>
<keyword id="KW-1185">Reference proteome</keyword>
<proteinExistence type="evidence at protein level"/>
<protein>
    <recommendedName>
        <fullName>Uncharacterized protein FLJ45252</fullName>
    </recommendedName>
</protein>
<sequence length="355" mass="37976">MGTKGLPLYPDPSRVPGTKTQNNLESDYLARDGPSSNSSFHSSEEEGTDLEGDMLDCSGSRPLLMESEEEDESCRPPPGKLGGAVPFAPPEVSPEQAKTVQGGRKNQFQAFTQPATDGLSEPDVFAIAPFRSSRVPNDDMDIFSKAPFVSKSSMAPSQPEESDVFLRAPFTKKKSMEELTVIQCTSQELPAQTGLLSQTGDVPLPAGRERAVYTSVQAQYSTAGFVQQSNLLSHSVQAADHLDSISPRGSCLESGGHSNDRNKGPQLQKEAVSGPMAGKPFRPQSLSKYSRHYSPEDEPSPEAQPIAAYKIVSQTNKQSIAGSVSITSLSSRTTELPAADPFALAPFPSKSGKKP</sequence>
<name>YJ005_HUMAN</name>
<comment type="caution">
    <text evidence="3">Encoded in the 3'-UTR of AAK1 but there is evidence for the existence of the protein from a number of proteomics studies.</text>
</comment>
<comment type="sequence caution" evidence="3">
    <conflict type="erroneous initiation">
        <sequence resource="EMBL-CDS" id="BAC86877"/>
    </conflict>
    <text>Truncated N-terminus.</text>
</comment>
<evidence type="ECO:0000250" key="1">
    <source>
        <dbReference type="UniProtKB" id="Q6PIU9"/>
    </source>
</evidence>
<evidence type="ECO:0000256" key="2">
    <source>
        <dbReference type="SAM" id="MobiDB-lite"/>
    </source>
</evidence>
<evidence type="ECO:0000305" key="3"/>